<organism>
    <name type="scientific">Rickettsia conorii (strain ATCC VR-613 / Malish 7)</name>
    <dbReference type="NCBI Taxonomy" id="272944"/>
    <lineage>
        <taxon>Bacteria</taxon>
        <taxon>Pseudomonadati</taxon>
        <taxon>Pseudomonadota</taxon>
        <taxon>Alphaproteobacteria</taxon>
        <taxon>Rickettsiales</taxon>
        <taxon>Rickettsiaceae</taxon>
        <taxon>Rickettsieae</taxon>
        <taxon>Rickettsia</taxon>
        <taxon>spotted fever group</taxon>
    </lineage>
</organism>
<comment type="function">
    <text evidence="1">Bifunctional serine/threonine kinase and phosphorylase involved in the regulation of the pyruvate, phosphate dikinase (PPDK) by catalyzing its phosphorylation/dephosphorylation.</text>
</comment>
<comment type="catalytic activity">
    <reaction evidence="1">
        <text>N(tele)-phospho-L-histidyl/L-threonyl-[pyruvate, phosphate dikinase] + ADP = N(tele)-phospho-L-histidyl/O-phospho-L-threonyl-[pyruvate, phosphate dikinase] + AMP + H(+)</text>
        <dbReference type="Rhea" id="RHEA:43692"/>
        <dbReference type="Rhea" id="RHEA-COMP:10650"/>
        <dbReference type="Rhea" id="RHEA-COMP:10651"/>
        <dbReference type="ChEBI" id="CHEBI:15378"/>
        <dbReference type="ChEBI" id="CHEBI:30013"/>
        <dbReference type="ChEBI" id="CHEBI:61977"/>
        <dbReference type="ChEBI" id="CHEBI:83586"/>
        <dbReference type="ChEBI" id="CHEBI:456215"/>
        <dbReference type="ChEBI" id="CHEBI:456216"/>
        <dbReference type="EC" id="2.7.11.32"/>
    </reaction>
</comment>
<comment type="catalytic activity">
    <reaction evidence="1">
        <text>N(tele)-phospho-L-histidyl/O-phospho-L-threonyl-[pyruvate, phosphate dikinase] + phosphate + H(+) = N(tele)-phospho-L-histidyl/L-threonyl-[pyruvate, phosphate dikinase] + diphosphate</text>
        <dbReference type="Rhea" id="RHEA:43696"/>
        <dbReference type="Rhea" id="RHEA-COMP:10650"/>
        <dbReference type="Rhea" id="RHEA-COMP:10651"/>
        <dbReference type="ChEBI" id="CHEBI:15378"/>
        <dbReference type="ChEBI" id="CHEBI:30013"/>
        <dbReference type="ChEBI" id="CHEBI:33019"/>
        <dbReference type="ChEBI" id="CHEBI:43474"/>
        <dbReference type="ChEBI" id="CHEBI:61977"/>
        <dbReference type="ChEBI" id="CHEBI:83586"/>
        <dbReference type="EC" id="2.7.4.27"/>
    </reaction>
</comment>
<comment type="similarity">
    <text evidence="1">Belongs to the pyruvate, phosphate/water dikinase regulatory protein family. PDRP subfamily.</text>
</comment>
<dbReference type="EC" id="2.7.11.32" evidence="1"/>
<dbReference type="EC" id="2.7.4.27" evidence="1"/>
<dbReference type="EMBL" id="AE006914">
    <property type="protein sequence ID" value="AAL02539.1"/>
    <property type="molecule type" value="Genomic_DNA"/>
</dbReference>
<dbReference type="PIR" id="A97700">
    <property type="entry name" value="A97700"/>
</dbReference>
<dbReference type="RefSeq" id="WP_010976691.1">
    <property type="nucleotide sequence ID" value="NC_003103.1"/>
</dbReference>
<dbReference type="SMR" id="Q92JR6"/>
<dbReference type="GeneID" id="928663"/>
<dbReference type="KEGG" id="rco:RC0001"/>
<dbReference type="HOGENOM" id="CLU_046206_2_0_5"/>
<dbReference type="Proteomes" id="UP000000816">
    <property type="component" value="Chromosome"/>
</dbReference>
<dbReference type="GO" id="GO:0043531">
    <property type="term" value="F:ADP binding"/>
    <property type="evidence" value="ECO:0007669"/>
    <property type="project" value="UniProtKB-UniRule"/>
</dbReference>
<dbReference type="GO" id="GO:0005524">
    <property type="term" value="F:ATP binding"/>
    <property type="evidence" value="ECO:0007669"/>
    <property type="project" value="InterPro"/>
</dbReference>
<dbReference type="GO" id="GO:0016776">
    <property type="term" value="F:phosphotransferase activity, phosphate group as acceptor"/>
    <property type="evidence" value="ECO:0007669"/>
    <property type="project" value="UniProtKB-UniRule"/>
</dbReference>
<dbReference type="GO" id="GO:0004674">
    <property type="term" value="F:protein serine/threonine kinase activity"/>
    <property type="evidence" value="ECO:0007669"/>
    <property type="project" value="UniProtKB-UniRule"/>
</dbReference>
<dbReference type="HAMAP" id="MF_00921">
    <property type="entry name" value="PDRP"/>
    <property type="match status" value="1"/>
</dbReference>
<dbReference type="InterPro" id="IPR005177">
    <property type="entry name" value="Kinase-pyrophosphorylase"/>
</dbReference>
<dbReference type="InterPro" id="IPR026565">
    <property type="entry name" value="PPDK_reg"/>
</dbReference>
<dbReference type="NCBIfam" id="NF003742">
    <property type="entry name" value="PRK05339.1"/>
    <property type="match status" value="1"/>
</dbReference>
<dbReference type="PANTHER" id="PTHR31756">
    <property type="entry name" value="PYRUVATE, PHOSPHATE DIKINASE REGULATORY PROTEIN 1, CHLOROPLASTIC"/>
    <property type="match status" value="1"/>
</dbReference>
<dbReference type="PANTHER" id="PTHR31756:SF3">
    <property type="entry name" value="PYRUVATE, PHOSPHATE DIKINASE REGULATORY PROTEIN 1, CHLOROPLASTIC"/>
    <property type="match status" value="1"/>
</dbReference>
<dbReference type="Pfam" id="PF03618">
    <property type="entry name" value="Kinase-PPPase"/>
    <property type="match status" value="1"/>
</dbReference>
<feature type="chain" id="PRO_0000196701" description="Putative pyruvate, phosphate dikinase regulatory protein">
    <location>
        <begin position="1"/>
        <end position="273"/>
    </location>
</feature>
<feature type="binding site" evidence="1">
    <location>
        <begin position="149"/>
        <end position="156"/>
    </location>
    <ligand>
        <name>ADP</name>
        <dbReference type="ChEBI" id="CHEBI:456216"/>
    </ligand>
</feature>
<gene>
    <name type="ordered locus">RC0001</name>
</gene>
<evidence type="ECO:0000255" key="1">
    <source>
        <dbReference type="HAMAP-Rule" id="MF_00921"/>
    </source>
</evidence>
<name>PDRP_RICCN</name>
<accession>Q92JR6</accession>
<sequence>MTKLIIHLVSDSSVQTAKYTANSALAQFTSVKPKLYHWPMIRNLELLNEVLSKIEYKHGIVLYTIADQELRKTLTKFCYELKIPCISVIGKIIKEMSVFSGIEIEKEQNYNYKFDKTYFDTLNAIDYAIRHDDGQMLNELSEADIILIGPSRTSKTPTSVFLAYNGLKAANIPYVYNCPFPDFIEKDIDQLVVGLVINPNRLIEIREARLNLLQINENKSYTDFNIVQKECLEVRKICDQRNWPVIDVSTRSIEETAALIMRIYYNRKNKYNK</sequence>
<reference key="1">
    <citation type="journal article" date="2001" name="Science">
        <title>Mechanisms of evolution in Rickettsia conorii and R. prowazekii.</title>
        <authorList>
            <person name="Ogata H."/>
            <person name="Audic S."/>
            <person name="Renesto-Audiffren P."/>
            <person name="Fournier P.-E."/>
            <person name="Barbe V."/>
            <person name="Samson D."/>
            <person name="Roux V."/>
            <person name="Cossart P."/>
            <person name="Weissenbach J."/>
            <person name="Claverie J.-M."/>
            <person name="Raoult D."/>
        </authorList>
    </citation>
    <scope>NUCLEOTIDE SEQUENCE [LARGE SCALE GENOMIC DNA]</scope>
    <source>
        <strain>ATCC VR-613 / Malish 7</strain>
    </source>
</reference>
<proteinExistence type="inferred from homology"/>
<protein>
    <recommendedName>
        <fullName evidence="1">Putative pyruvate, phosphate dikinase regulatory protein</fullName>
        <shortName evidence="1">PPDK regulatory protein</shortName>
        <ecNumber evidence="1">2.7.11.32</ecNumber>
        <ecNumber evidence="1">2.7.4.27</ecNumber>
    </recommendedName>
</protein>
<keyword id="KW-0418">Kinase</keyword>
<keyword id="KW-0547">Nucleotide-binding</keyword>
<keyword id="KW-0723">Serine/threonine-protein kinase</keyword>
<keyword id="KW-0808">Transferase</keyword>